<organism>
    <name type="scientific">Pseudomonas fluorescens (strain ATCC BAA-477 / NRRL B-23932 / Pf-5)</name>
    <dbReference type="NCBI Taxonomy" id="220664"/>
    <lineage>
        <taxon>Bacteria</taxon>
        <taxon>Pseudomonadati</taxon>
        <taxon>Pseudomonadota</taxon>
        <taxon>Gammaproteobacteria</taxon>
        <taxon>Pseudomonadales</taxon>
        <taxon>Pseudomonadaceae</taxon>
        <taxon>Pseudomonas</taxon>
    </lineage>
</organism>
<keyword id="KW-0004">4Fe-4S</keyword>
<keyword id="KW-0997">Cell inner membrane</keyword>
<keyword id="KW-1003">Cell membrane</keyword>
<keyword id="KW-0408">Iron</keyword>
<keyword id="KW-0411">Iron-sulfur</keyword>
<keyword id="KW-0472">Membrane</keyword>
<keyword id="KW-0479">Metal-binding</keyword>
<keyword id="KW-0520">NAD</keyword>
<keyword id="KW-0874">Quinone</keyword>
<keyword id="KW-0677">Repeat</keyword>
<keyword id="KW-1278">Translocase</keyword>
<keyword id="KW-0830">Ubiquinone</keyword>
<feature type="chain" id="PRO_0000245728" description="NADH-quinone oxidoreductase subunit I">
    <location>
        <begin position="1"/>
        <end position="182"/>
    </location>
</feature>
<feature type="domain" description="4Fe-4S ferredoxin-type 1" evidence="1">
    <location>
        <begin position="52"/>
        <end position="82"/>
    </location>
</feature>
<feature type="domain" description="4Fe-4S ferredoxin-type 2" evidence="1">
    <location>
        <begin position="92"/>
        <end position="121"/>
    </location>
</feature>
<feature type="binding site" evidence="1">
    <location>
        <position position="62"/>
    </location>
    <ligand>
        <name>[4Fe-4S] cluster</name>
        <dbReference type="ChEBI" id="CHEBI:49883"/>
        <label>1</label>
    </ligand>
</feature>
<feature type="binding site" evidence="1">
    <location>
        <position position="65"/>
    </location>
    <ligand>
        <name>[4Fe-4S] cluster</name>
        <dbReference type="ChEBI" id="CHEBI:49883"/>
        <label>1</label>
    </ligand>
</feature>
<feature type="binding site" evidence="1">
    <location>
        <position position="68"/>
    </location>
    <ligand>
        <name>[4Fe-4S] cluster</name>
        <dbReference type="ChEBI" id="CHEBI:49883"/>
        <label>1</label>
    </ligand>
</feature>
<feature type="binding site" evidence="1">
    <location>
        <position position="72"/>
    </location>
    <ligand>
        <name>[4Fe-4S] cluster</name>
        <dbReference type="ChEBI" id="CHEBI:49883"/>
        <label>2</label>
    </ligand>
</feature>
<feature type="binding site" evidence="1">
    <location>
        <position position="101"/>
    </location>
    <ligand>
        <name>[4Fe-4S] cluster</name>
        <dbReference type="ChEBI" id="CHEBI:49883"/>
        <label>2</label>
    </ligand>
</feature>
<feature type="binding site" evidence="1">
    <location>
        <position position="104"/>
    </location>
    <ligand>
        <name>[4Fe-4S] cluster</name>
        <dbReference type="ChEBI" id="CHEBI:49883"/>
        <label>2</label>
    </ligand>
</feature>
<feature type="binding site" evidence="1">
    <location>
        <position position="107"/>
    </location>
    <ligand>
        <name>[4Fe-4S] cluster</name>
        <dbReference type="ChEBI" id="CHEBI:49883"/>
        <label>2</label>
    </ligand>
</feature>
<feature type="binding site" evidence="1">
    <location>
        <position position="111"/>
    </location>
    <ligand>
        <name>[4Fe-4S] cluster</name>
        <dbReference type="ChEBI" id="CHEBI:49883"/>
        <label>1</label>
    </ligand>
</feature>
<evidence type="ECO:0000255" key="1">
    <source>
        <dbReference type="HAMAP-Rule" id="MF_01351"/>
    </source>
</evidence>
<protein>
    <recommendedName>
        <fullName evidence="1">NADH-quinone oxidoreductase subunit I</fullName>
        <ecNumber evidence="1">7.1.1.-</ecNumber>
    </recommendedName>
    <alternativeName>
        <fullName evidence="1">NADH dehydrogenase I subunit I</fullName>
    </alternativeName>
    <alternativeName>
        <fullName evidence="1">NDH-1 subunit I</fullName>
    </alternativeName>
</protein>
<sequence>MFKYIGDIVKGTGTQLRSLVMVFGHGFRKRDTLQYPEEPVYLPPRYRGRIVLTRDPDGEERCVACNLCAVACPVGCISLQKAETEDGRWYPDFFRINFSRCIFCGLCEEACPTTAIQLTPDFEMAEFKRQDLVYEKEDLLISGPGKNPDYNFYRVAGMAIAGKPKGSAQNEAEPINVKSLLP</sequence>
<reference key="1">
    <citation type="journal article" date="2005" name="Nat. Biotechnol.">
        <title>Complete genome sequence of the plant commensal Pseudomonas fluorescens Pf-5.</title>
        <authorList>
            <person name="Paulsen I.T."/>
            <person name="Press C.M."/>
            <person name="Ravel J."/>
            <person name="Kobayashi D.Y."/>
            <person name="Myers G.S.A."/>
            <person name="Mavrodi D.V."/>
            <person name="DeBoy R.T."/>
            <person name="Seshadri R."/>
            <person name="Ren Q."/>
            <person name="Madupu R."/>
            <person name="Dodson R.J."/>
            <person name="Durkin A.S."/>
            <person name="Brinkac L.M."/>
            <person name="Daugherty S.C."/>
            <person name="Sullivan S.A."/>
            <person name="Rosovitz M.J."/>
            <person name="Gwinn M.L."/>
            <person name="Zhou L."/>
            <person name="Schneider D.J."/>
            <person name="Cartinhour S.W."/>
            <person name="Nelson W.C."/>
            <person name="Weidman J."/>
            <person name="Watkins K."/>
            <person name="Tran K."/>
            <person name="Khouri H."/>
            <person name="Pierson E.A."/>
            <person name="Pierson L.S. III"/>
            <person name="Thomashow L.S."/>
            <person name="Loper J.E."/>
        </authorList>
    </citation>
    <scope>NUCLEOTIDE SEQUENCE [LARGE SCALE GENOMIC DNA]</scope>
    <source>
        <strain>ATCC BAA-477 / NRRL B-23932 / Pf-5</strain>
    </source>
</reference>
<proteinExistence type="inferred from homology"/>
<accession>Q4K9S9</accession>
<dbReference type="EC" id="7.1.1.-" evidence="1"/>
<dbReference type="EMBL" id="CP000076">
    <property type="protein sequence ID" value="AAY93168.1"/>
    <property type="molecule type" value="Genomic_DNA"/>
</dbReference>
<dbReference type="RefSeq" id="WP_003223795.1">
    <property type="nucleotide sequence ID" value="NC_004129.6"/>
</dbReference>
<dbReference type="SMR" id="Q4K9S9"/>
<dbReference type="STRING" id="220664.PFL_3904"/>
<dbReference type="GeneID" id="93404563"/>
<dbReference type="KEGG" id="pfl:PFL_3904"/>
<dbReference type="eggNOG" id="COG1143">
    <property type="taxonomic scope" value="Bacteria"/>
</dbReference>
<dbReference type="HOGENOM" id="CLU_067218_4_3_6"/>
<dbReference type="Proteomes" id="UP000008540">
    <property type="component" value="Chromosome"/>
</dbReference>
<dbReference type="GO" id="GO:0005886">
    <property type="term" value="C:plasma membrane"/>
    <property type="evidence" value="ECO:0007669"/>
    <property type="project" value="UniProtKB-SubCell"/>
</dbReference>
<dbReference type="GO" id="GO:0051539">
    <property type="term" value="F:4 iron, 4 sulfur cluster binding"/>
    <property type="evidence" value="ECO:0007669"/>
    <property type="project" value="UniProtKB-KW"/>
</dbReference>
<dbReference type="GO" id="GO:0005506">
    <property type="term" value="F:iron ion binding"/>
    <property type="evidence" value="ECO:0007669"/>
    <property type="project" value="UniProtKB-UniRule"/>
</dbReference>
<dbReference type="GO" id="GO:0050136">
    <property type="term" value="F:NADH:ubiquinone reductase (non-electrogenic) activity"/>
    <property type="evidence" value="ECO:0007669"/>
    <property type="project" value="UniProtKB-UniRule"/>
</dbReference>
<dbReference type="GO" id="GO:0048038">
    <property type="term" value="F:quinone binding"/>
    <property type="evidence" value="ECO:0007669"/>
    <property type="project" value="UniProtKB-KW"/>
</dbReference>
<dbReference type="GO" id="GO:0009060">
    <property type="term" value="P:aerobic respiration"/>
    <property type="evidence" value="ECO:0007669"/>
    <property type="project" value="TreeGrafter"/>
</dbReference>
<dbReference type="FunFam" id="3.30.70.3270:FF:000002">
    <property type="entry name" value="NADH-quinone oxidoreductase subunit I"/>
    <property type="match status" value="1"/>
</dbReference>
<dbReference type="Gene3D" id="3.30.70.3270">
    <property type="match status" value="1"/>
</dbReference>
<dbReference type="HAMAP" id="MF_01351">
    <property type="entry name" value="NDH1_NuoI"/>
    <property type="match status" value="1"/>
</dbReference>
<dbReference type="InterPro" id="IPR017896">
    <property type="entry name" value="4Fe4S_Fe-S-bd"/>
</dbReference>
<dbReference type="InterPro" id="IPR017900">
    <property type="entry name" value="4Fe4S_Fe_S_CS"/>
</dbReference>
<dbReference type="InterPro" id="IPR010226">
    <property type="entry name" value="NADH_quinone_OxRdtase_chainI"/>
</dbReference>
<dbReference type="NCBIfam" id="TIGR01971">
    <property type="entry name" value="NuoI"/>
    <property type="match status" value="1"/>
</dbReference>
<dbReference type="NCBIfam" id="NF004536">
    <property type="entry name" value="PRK05888.1-1"/>
    <property type="match status" value="1"/>
</dbReference>
<dbReference type="PANTHER" id="PTHR10849:SF20">
    <property type="entry name" value="NADH DEHYDROGENASE [UBIQUINONE] IRON-SULFUR PROTEIN 8, MITOCHONDRIAL"/>
    <property type="match status" value="1"/>
</dbReference>
<dbReference type="PANTHER" id="PTHR10849">
    <property type="entry name" value="NADH DEHYDROGENASE UBIQUINONE IRON-SULFUR PROTEIN 8, MITOCHONDRIAL"/>
    <property type="match status" value="1"/>
</dbReference>
<dbReference type="Pfam" id="PF12838">
    <property type="entry name" value="Fer4_7"/>
    <property type="match status" value="1"/>
</dbReference>
<dbReference type="SUPFAM" id="SSF54862">
    <property type="entry name" value="4Fe-4S ferredoxins"/>
    <property type="match status" value="1"/>
</dbReference>
<dbReference type="PROSITE" id="PS00198">
    <property type="entry name" value="4FE4S_FER_1"/>
    <property type="match status" value="2"/>
</dbReference>
<dbReference type="PROSITE" id="PS51379">
    <property type="entry name" value="4FE4S_FER_2"/>
    <property type="match status" value="2"/>
</dbReference>
<gene>
    <name evidence="1" type="primary">nuoI</name>
    <name type="ordered locus">PFL_3904</name>
</gene>
<name>NUOI_PSEF5</name>
<comment type="function">
    <text evidence="1">NDH-1 shuttles electrons from NADH, via FMN and iron-sulfur (Fe-S) centers, to quinones in the respiratory chain. The immediate electron acceptor for the enzyme in this species is believed to be ubiquinone. Couples the redox reaction to proton translocation (for every two electrons transferred, four hydrogen ions are translocated across the cytoplasmic membrane), and thus conserves the redox energy in a proton gradient.</text>
</comment>
<comment type="catalytic activity">
    <reaction evidence="1">
        <text>a quinone + NADH + 5 H(+)(in) = a quinol + NAD(+) + 4 H(+)(out)</text>
        <dbReference type="Rhea" id="RHEA:57888"/>
        <dbReference type="ChEBI" id="CHEBI:15378"/>
        <dbReference type="ChEBI" id="CHEBI:24646"/>
        <dbReference type="ChEBI" id="CHEBI:57540"/>
        <dbReference type="ChEBI" id="CHEBI:57945"/>
        <dbReference type="ChEBI" id="CHEBI:132124"/>
    </reaction>
</comment>
<comment type="cofactor">
    <cofactor evidence="1">
        <name>[4Fe-4S] cluster</name>
        <dbReference type="ChEBI" id="CHEBI:49883"/>
    </cofactor>
    <text evidence="1">Binds 2 [4Fe-4S] clusters per subunit.</text>
</comment>
<comment type="subunit">
    <text evidence="1">NDH-1 is composed of 13 different subunits. Subunits NuoA, H, J, K, L, M, N constitute the membrane sector of the complex.</text>
</comment>
<comment type="subcellular location">
    <subcellularLocation>
        <location evidence="1">Cell inner membrane</location>
        <topology evidence="1">Peripheral membrane protein</topology>
    </subcellularLocation>
</comment>
<comment type="similarity">
    <text evidence="1">Belongs to the complex I 23 kDa subunit family.</text>
</comment>